<keyword id="KW-0131">Cell cycle</keyword>
<keyword id="KW-0132">Cell division</keyword>
<keyword id="KW-0159">Chromosome partition</keyword>
<keyword id="KW-0963">Cytoplasm</keyword>
<keyword id="KW-0229">DNA integration</keyword>
<keyword id="KW-0233">DNA recombination</keyword>
<keyword id="KW-0238">DNA-binding</keyword>
<organism>
    <name type="scientific">Roseiflexus sp. (strain RS-1)</name>
    <dbReference type="NCBI Taxonomy" id="357808"/>
    <lineage>
        <taxon>Bacteria</taxon>
        <taxon>Bacillati</taxon>
        <taxon>Chloroflexota</taxon>
        <taxon>Chloroflexia</taxon>
        <taxon>Chloroflexales</taxon>
        <taxon>Roseiflexineae</taxon>
        <taxon>Roseiflexaceae</taxon>
        <taxon>Roseiflexus</taxon>
    </lineage>
</organism>
<proteinExistence type="inferred from homology"/>
<reference key="1">
    <citation type="submission" date="2007-04" db="EMBL/GenBank/DDBJ databases">
        <title>Complete sequence of Roseiflexus sp. RS-1.</title>
        <authorList>
            <consortium name="US DOE Joint Genome Institute"/>
            <person name="Copeland A."/>
            <person name="Lucas S."/>
            <person name="Lapidus A."/>
            <person name="Barry K."/>
            <person name="Detter J.C."/>
            <person name="Glavina del Rio T."/>
            <person name="Hammon N."/>
            <person name="Israni S."/>
            <person name="Dalin E."/>
            <person name="Tice H."/>
            <person name="Pitluck S."/>
            <person name="Chertkov O."/>
            <person name="Brettin T."/>
            <person name="Bruce D."/>
            <person name="Han C."/>
            <person name="Schmutz J."/>
            <person name="Larimer F."/>
            <person name="Land M."/>
            <person name="Hauser L."/>
            <person name="Kyrpides N."/>
            <person name="Mikhailova N."/>
            <person name="Bryant D.A."/>
            <person name="Richardson P."/>
        </authorList>
    </citation>
    <scope>NUCLEOTIDE SEQUENCE [LARGE SCALE GENOMIC DNA]</scope>
    <source>
        <strain>RS-1</strain>
    </source>
</reference>
<evidence type="ECO:0000255" key="1">
    <source>
        <dbReference type="HAMAP-Rule" id="MF_01808"/>
    </source>
</evidence>
<evidence type="ECO:0000255" key="2">
    <source>
        <dbReference type="PROSITE-ProRule" id="PRU01246"/>
    </source>
</evidence>
<evidence type="ECO:0000255" key="3">
    <source>
        <dbReference type="PROSITE-ProRule" id="PRU01248"/>
    </source>
</evidence>
<sequence>MNDQVEAFLRHLADERNLAANTIAAYRTDLDQFCDFVSARNRREWRDVSHDDILSFMLYLRERRYASSTVARRVAAVKSFFAFLTGSGAVPHDPTERIDSPKVDRDLPRALTPHQVDELLELPLRSPTPERIRDKAMLELLYATGMRVSELVALNMTDIDLVHSTVRCTGKNGRVRVLPINGSAATALEEYCDNSRSQLARGSDAPIDALFLNHRGKRLTRQGFWLILKQYAEEMGLGELTPHMLRHSFAVHMLNAGADLRAVQELLGHTSISTTQIYTHINHASSAQPVRSEPRATEVNGVINEQALVPEEK</sequence>
<dbReference type="EMBL" id="CP000686">
    <property type="protein sequence ID" value="ABQ89276.1"/>
    <property type="molecule type" value="Genomic_DNA"/>
</dbReference>
<dbReference type="RefSeq" id="WP_011955629.1">
    <property type="nucleotide sequence ID" value="NC_009523.1"/>
</dbReference>
<dbReference type="SMR" id="A5URM3"/>
<dbReference type="STRING" id="357808.RoseRS_0863"/>
<dbReference type="KEGG" id="rrs:RoseRS_0863"/>
<dbReference type="eggNOG" id="COG4974">
    <property type="taxonomic scope" value="Bacteria"/>
</dbReference>
<dbReference type="HOGENOM" id="CLU_027562_9_0_0"/>
<dbReference type="OrthoDB" id="9785687at2"/>
<dbReference type="Proteomes" id="UP000006554">
    <property type="component" value="Chromosome"/>
</dbReference>
<dbReference type="GO" id="GO:0005737">
    <property type="term" value="C:cytoplasm"/>
    <property type="evidence" value="ECO:0007669"/>
    <property type="project" value="UniProtKB-SubCell"/>
</dbReference>
<dbReference type="GO" id="GO:0003677">
    <property type="term" value="F:DNA binding"/>
    <property type="evidence" value="ECO:0007669"/>
    <property type="project" value="UniProtKB-KW"/>
</dbReference>
<dbReference type="GO" id="GO:0009037">
    <property type="term" value="F:tyrosine-based site-specific recombinase activity"/>
    <property type="evidence" value="ECO:0007669"/>
    <property type="project" value="UniProtKB-UniRule"/>
</dbReference>
<dbReference type="GO" id="GO:0051301">
    <property type="term" value="P:cell division"/>
    <property type="evidence" value="ECO:0007669"/>
    <property type="project" value="UniProtKB-KW"/>
</dbReference>
<dbReference type="GO" id="GO:0007059">
    <property type="term" value="P:chromosome segregation"/>
    <property type="evidence" value="ECO:0007669"/>
    <property type="project" value="UniProtKB-UniRule"/>
</dbReference>
<dbReference type="GO" id="GO:0006313">
    <property type="term" value="P:DNA transposition"/>
    <property type="evidence" value="ECO:0007669"/>
    <property type="project" value="UniProtKB-UniRule"/>
</dbReference>
<dbReference type="CDD" id="cd00798">
    <property type="entry name" value="INT_XerDC_C"/>
    <property type="match status" value="1"/>
</dbReference>
<dbReference type="Gene3D" id="1.10.150.130">
    <property type="match status" value="1"/>
</dbReference>
<dbReference type="Gene3D" id="1.10.443.10">
    <property type="entry name" value="Intergrase catalytic core"/>
    <property type="match status" value="1"/>
</dbReference>
<dbReference type="HAMAP" id="MF_01808">
    <property type="entry name" value="Recomb_XerC_XerD"/>
    <property type="match status" value="1"/>
</dbReference>
<dbReference type="InterPro" id="IPR044068">
    <property type="entry name" value="CB"/>
</dbReference>
<dbReference type="InterPro" id="IPR011010">
    <property type="entry name" value="DNA_brk_join_enz"/>
</dbReference>
<dbReference type="InterPro" id="IPR013762">
    <property type="entry name" value="Integrase-like_cat_sf"/>
</dbReference>
<dbReference type="InterPro" id="IPR002104">
    <property type="entry name" value="Integrase_catalytic"/>
</dbReference>
<dbReference type="InterPro" id="IPR010998">
    <property type="entry name" value="Integrase_recombinase_N"/>
</dbReference>
<dbReference type="InterPro" id="IPR004107">
    <property type="entry name" value="Integrase_SAM-like_N"/>
</dbReference>
<dbReference type="InterPro" id="IPR011932">
    <property type="entry name" value="Recomb_XerD"/>
</dbReference>
<dbReference type="InterPro" id="IPR023009">
    <property type="entry name" value="Tyrosine_recombinase_XerC/XerD"/>
</dbReference>
<dbReference type="InterPro" id="IPR050090">
    <property type="entry name" value="Tyrosine_recombinase_XerCD"/>
</dbReference>
<dbReference type="NCBIfam" id="NF001399">
    <property type="entry name" value="PRK00283.1"/>
    <property type="match status" value="1"/>
</dbReference>
<dbReference type="NCBIfam" id="NF040815">
    <property type="entry name" value="recomb_XerA_Arch"/>
    <property type="match status" value="1"/>
</dbReference>
<dbReference type="NCBIfam" id="TIGR02225">
    <property type="entry name" value="recomb_XerD"/>
    <property type="match status" value="1"/>
</dbReference>
<dbReference type="PANTHER" id="PTHR30349">
    <property type="entry name" value="PHAGE INTEGRASE-RELATED"/>
    <property type="match status" value="1"/>
</dbReference>
<dbReference type="PANTHER" id="PTHR30349:SF81">
    <property type="entry name" value="TYROSINE RECOMBINASE XERC"/>
    <property type="match status" value="1"/>
</dbReference>
<dbReference type="Pfam" id="PF02899">
    <property type="entry name" value="Phage_int_SAM_1"/>
    <property type="match status" value="1"/>
</dbReference>
<dbReference type="Pfam" id="PF00589">
    <property type="entry name" value="Phage_integrase"/>
    <property type="match status" value="1"/>
</dbReference>
<dbReference type="SUPFAM" id="SSF56349">
    <property type="entry name" value="DNA breaking-rejoining enzymes"/>
    <property type="match status" value="1"/>
</dbReference>
<dbReference type="PROSITE" id="PS51900">
    <property type="entry name" value="CB"/>
    <property type="match status" value="1"/>
</dbReference>
<dbReference type="PROSITE" id="PS51898">
    <property type="entry name" value="TYR_RECOMBINASE"/>
    <property type="match status" value="1"/>
</dbReference>
<comment type="function">
    <text evidence="1">Site-specific tyrosine recombinase, which acts by catalyzing the cutting and rejoining of the recombining DNA molecules. The XerC-XerD complex is essential to convert dimers of the bacterial chromosome into monomers to permit their segregation at cell division. It also contributes to the segregational stability of plasmids.</text>
</comment>
<comment type="subunit">
    <text evidence="1">Forms a cyclic heterotetrameric complex composed of two molecules of XerC and two molecules of XerD.</text>
</comment>
<comment type="subcellular location">
    <subcellularLocation>
        <location evidence="1">Cytoplasm</location>
    </subcellularLocation>
</comment>
<comment type="similarity">
    <text evidence="1">Belongs to the 'phage' integrase family. XerC subfamily.</text>
</comment>
<accession>A5URM3</accession>
<protein>
    <recommendedName>
        <fullName evidence="1">Tyrosine recombinase XerC</fullName>
    </recommendedName>
</protein>
<feature type="chain" id="PRO_1000187613" description="Tyrosine recombinase XerC">
    <location>
        <begin position="1"/>
        <end position="313"/>
    </location>
</feature>
<feature type="domain" description="Core-binding (CB)" evidence="3">
    <location>
        <begin position="1"/>
        <end position="85"/>
    </location>
</feature>
<feature type="domain" description="Tyr recombinase" evidence="2">
    <location>
        <begin position="106"/>
        <end position="291"/>
    </location>
</feature>
<feature type="active site" evidence="1">
    <location>
        <position position="147"/>
    </location>
</feature>
<feature type="active site" evidence="1">
    <location>
        <position position="171"/>
    </location>
</feature>
<feature type="active site" evidence="1">
    <location>
        <position position="243"/>
    </location>
</feature>
<feature type="active site" evidence="1">
    <location>
        <position position="246"/>
    </location>
</feature>
<feature type="active site" evidence="1">
    <location>
        <position position="269"/>
    </location>
</feature>
<feature type="active site" description="O-(3'-phospho-DNA)-tyrosine intermediate" evidence="1">
    <location>
        <position position="278"/>
    </location>
</feature>
<name>XERC_ROSS1</name>
<gene>
    <name evidence="1" type="primary">xerC</name>
    <name type="ordered locus">RoseRS_0863</name>
</gene>